<evidence type="ECO:0000255" key="1">
    <source>
        <dbReference type="PROSITE-ProRule" id="PRU00042"/>
    </source>
</evidence>
<evidence type="ECO:0000255" key="2">
    <source>
        <dbReference type="PROSITE-ProRule" id="PRU00119"/>
    </source>
</evidence>
<evidence type="ECO:0000305" key="3"/>
<evidence type="ECO:0007744" key="4">
    <source>
    </source>
</evidence>
<comment type="function">
    <text>May be involved in transcriptional regulation.</text>
</comment>
<comment type="interaction">
    <interactant intactId="EBI-7254491">
        <id>Q9BRH9</id>
    </interactant>
    <interactant intactId="EBI-750641">
        <id>Q5TD97</id>
        <label>FHL5</label>
    </interactant>
    <organismsDiffer>false</organismsDiffer>
    <experiments>3</experiments>
</comment>
<comment type="interaction">
    <interactant intactId="EBI-7254491">
        <id>Q9BRH9</id>
    </interactant>
    <interactant intactId="EBI-10172052">
        <id>P60411</id>
        <label>KRTAP10-9</label>
    </interactant>
    <organismsDiffer>false</organismsDiffer>
    <experiments>3</experiments>
</comment>
<comment type="interaction">
    <interactant intactId="EBI-7254491">
        <id>Q9BRH9</id>
    </interactant>
    <interactant intactId="EBI-725997">
        <id>Q8WV44</id>
        <label>TRIM41</label>
    </interactant>
    <organismsDiffer>false</organismsDiffer>
    <experiments>3</experiments>
</comment>
<comment type="subcellular location">
    <subcellularLocation>
        <location evidence="3">Nucleus</location>
    </subcellularLocation>
</comment>
<comment type="similarity">
    <text evidence="3">Belongs to the krueppel C2H2-type zinc-finger protein family.</text>
</comment>
<name>ZN251_HUMAN</name>
<organism>
    <name type="scientific">Homo sapiens</name>
    <name type="common">Human</name>
    <dbReference type="NCBI Taxonomy" id="9606"/>
    <lineage>
        <taxon>Eukaryota</taxon>
        <taxon>Metazoa</taxon>
        <taxon>Chordata</taxon>
        <taxon>Craniata</taxon>
        <taxon>Vertebrata</taxon>
        <taxon>Euteleostomi</taxon>
        <taxon>Mammalia</taxon>
        <taxon>Eutheria</taxon>
        <taxon>Euarchontoglires</taxon>
        <taxon>Primates</taxon>
        <taxon>Haplorrhini</taxon>
        <taxon>Catarrhini</taxon>
        <taxon>Hominidae</taxon>
        <taxon>Homo</taxon>
    </lineage>
</organism>
<keyword id="KW-0238">DNA-binding</keyword>
<keyword id="KW-1017">Isopeptide bond</keyword>
<keyword id="KW-0479">Metal-binding</keyword>
<keyword id="KW-0539">Nucleus</keyword>
<keyword id="KW-1267">Proteomics identification</keyword>
<keyword id="KW-1185">Reference proteome</keyword>
<keyword id="KW-0677">Repeat</keyword>
<keyword id="KW-0804">Transcription</keyword>
<keyword id="KW-0805">Transcription regulation</keyword>
<keyword id="KW-0832">Ubl conjugation</keyword>
<keyword id="KW-0862">Zinc</keyword>
<keyword id="KW-0863">Zinc-finger</keyword>
<gene>
    <name type="primary">ZNF251</name>
</gene>
<sequence>MAATFQLPGHQEMPLTFQDVAVYFSQAEGRQLGPQQRALYRDVMLENYGNVASLGFPVPKPELISQLEQGKELWVLNLLGAEEPDILKSCQKDSEVGTKKELSILNQKFSEEVKTPEFVSRRLLRDNAQAAEFREAWGREGKLKERVGNSAGQSLNKPNIHKRVLTEATVGRERSLGERTQECSAFDRNLNLDQNVVRLQRNKTGERVFKCDICSKTFKYNSDLSRHQRSHTGEKPYECGRCGRAFTHSSNLVLHHHIHTGNKPFKCDECGKTFGLNSHLRLHRRIHTGEKPFGCGECGKAFSRSSTLIQHRIIHTGEKPYKCNECGRGFSQSPQLTQHQRIHTGEKPHECSHCGKAFSRSSSLIQHERIHTGEKPHKCNQCGKAFSQSSSLFLHHRVHTGEKPYVCNECGRAFGFNSHLTEHVRIHTGEKPYVCNECGKAFRRSSTLVQHRRVHTGEKPYQCVECGKAFSQSSQLTLHQRVHTGEKPYDCGDCGKAFSRRSTLIQHQKVHSGETRKCRKHGPAFVHGSSLTADGQIPTGEKHGRAFNHGANLILRWTVHTGEKSFGCNEYGKAFSPTSRPTEDQIMHAGEKPYKCQECGNAFSGKSTLIQHQVTHTGQKPCHCSVYGKAFSQSSQLTPPQQTRVGEKPALNDGSKRYFIHIKKIFQERHF</sequence>
<protein>
    <recommendedName>
        <fullName>Zinc finger protein 251</fullName>
    </recommendedName>
</protein>
<dbReference type="EMBL" id="AK000435">
    <property type="status" value="NOT_ANNOTATED_CDS"/>
    <property type="molecule type" value="mRNA"/>
</dbReference>
<dbReference type="EMBL" id="AF186192">
    <property type="status" value="NOT_ANNOTATED_CDS"/>
    <property type="molecule type" value="Genomic_DNA"/>
</dbReference>
<dbReference type="EMBL" id="BC006258">
    <property type="protein sequence ID" value="AAH06258.2"/>
    <property type="molecule type" value="mRNA"/>
</dbReference>
<dbReference type="EMBL" id="BC112137">
    <property type="protein sequence ID" value="AAI12138.1"/>
    <property type="molecule type" value="mRNA"/>
</dbReference>
<dbReference type="CCDS" id="CCDS47944.1"/>
<dbReference type="RefSeq" id="NP_612376.1">
    <property type="nucleotide sequence ID" value="NM_138367.2"/>
</dbReference>
<dbReference type="RefSeq" id="XP_024303092.1">
    <property type="nucleotide sequence ID" value="XM_024447324.2"/>
</dbReference>
<dbReference type="RefSeq" id="XP_054184687.1">
    <property type="nucleotide sequence ID" value="XM_054328712.1"/>
</dbReference>
<dbReference type="RefSeq" id="XP_054217448.1">
    <property type="nucleotide sequence ID" value="XM_054361473.1"/>
</dbReference>
<dbReference type="SMR" id="Q9BRH9"/>
<dbReference type="BioGRID" id="124784">
    <property type="interactions" value="20"/>
</dbReference>
<dbReference type="FunCoup" id="Q9BRH9">
    <property type="interactions" value="6"/>
</dbReference>
<dbReference type="IntAct" id="Q9BRH9">
    <property type="interactions" value="18"/>
</dbReference>
<dbReference type="MINT" id="Q9BRH9"/>
<dbReference type="STRING" id="9606.ENSP00000292562"/>
<dbReference type="iPTMnet" id="Q9BRH9"/>
<dbReference type="PhosphoSitePlus" id="Q9BRH9"/>
<dbReference type="BioMuta" id="ZNF251"/>
<dbReference type="DMDM" id="317373550"/>
<dbReference type="jPOST" id="Q9BRH9"/>
<dbReference type="MassIVE" id="Q9BRH9"/>
<dbReference type="PaxDb" id="9606-ENSP00000292562"/>
<dbReference type="PeptideAtlas" id="Q9BRH9"/>
<dbReference type="ProteomicsDB" id="78765"/>
<dbReference type="Antibodypedia" id="7908">
    <property type="antibodies" value="102 antibodies from 15 providers"/>
</dbReference>
<dbReference type="DNASU" id="90987"/>
<dbReference type="Ensembl" id="ENST00000292562.12">
    <property type="protein sequence ID" value="ENSP00000292562.7"/>
    <property type="gene ID" value="ENSG00000198169.9"/>
</dbReference>
<dbReference type="Ensembl" id="ENST00000612318.2">
    <property type="protein sequence ID" value="ENSP00000477765.1"/>
    <property type="gene ID" value="ENSG00000278062.2"/>
</dbReference>
<dbReference type="GeneID" id="90987"/>
<dbReference type="KEGG" id="hsa:90987"/>
<dbReference type="MANE-Select" id="ENST00000292562.12">
    <property type="protein sequence ID" value="ENSP00000292562.7"/>
    <property type="RefSeq nucleotide sequence ID" value="NM_138367.2"/>
    <property type="RefSeq protein sequence ID" value="NP_612376.1"/>
</dbReference>
<dbReference type="UCSC" id="uc003zdv.5">
    <property type="organism name" value="human"/>
</dbReference>
<dbReference type="AGR" id="HGNC:13045"/>
<dbReference type="CTD" id="90987"/>
<dbReference type="DisGeNET" id="90987"/>
<dbReference type="GeneCards" id="ZNF251"/>
<dbReference type="HGNC" id="HGNC:13045">
    <property type="gene designation" value="ZNF251"/>
</dbReference>
<dbReference type="HPA" id="ENSG00000198169">
    <property type="expression patterns" value="Low tissue specificity"/>
</dbReference>
<dbReference type="neXtProt" id="NX_Q9BRH9"/>
<dbReference type="OpenTargets" id="ENSG00000198169"/>
<dbReference type="PharmGKB" id="PA37623"/>
<dbReference type="VEuPathDB" id="HostDB:ENSG00000198169"/>
<dbReference type="eggNOG" id="KOG1721">
    <property type="taxonomic scope" value="Eukaryota"/>
</dbReference>
<dbReference type="GeneTree" id="ENSGT00940000163332"/>
<dbReference type="HOGENOM" id="CLU_002678_44_5_1"/>
<dbReference type="InParanoid" id="Q9BRH9"/>
<dbReference type="OMA" id="IHIKKIF"/>
<dbReference type="OrthoDB" id="8922241at2759"/>
<dbReference type="PAN-GO" id="Q9BRH9">
    <property type="GO annotations" value="4 GO annotations based on evolutionary models"/>
</dbReference>
<dbReference type="PhylomeDB" id="Q9BRH9"/>
<dbReference type="TreeFam" id="TF350822"/>
<dbReference type="PathwayCommons" id="Q9BRH9"/>
<dbReference type="SignaLink" id="Q9BRH9"/>
<dbReference type="BioGRID-ORCS" id="90987">
    <property type="hits" value="12 hits in 1172 CRISPR screens"/>
</dbReference>
<dbReference type="ChiTaRS" id="ZNF251">
    <property type="organism name" value="human"/>
</dbReference>
<dbReference type="GenomeRNAi" id="90987"/>
<dbReference type="Pharos" id="Q9BRH9">
    <property type="development level" value="Tdark"/>
</dbReference>
<dbReference type="PRO" id="PR:Q9BRH9"/>
<dbReference type="Proteomes" id="UP000005640">
    <property type="component" value="Chromosome 8"/>
</dbReference>
<dbReference type="RNAct" id="Q9BRH9">
    <property type="molecule type" value="protein"/>
</dbReference>
<dbReference type="Bgee" id="ENSG00000198169">
    <property type="expression patterns" value="Expressed in cerebellar hemisphere and 94 other cell types or tissues"/>
</dbReference>
<dbReference type="ExpressionAtlas" id="Q9BRH9">
    <property type="expression patterns" value="baseline and differential"/>
</dbReference>
<dbReference type="GO" id="GO:0005634">
    <property type="term" value="C:nucleus"/>
    <property type="evidence" value="ECO:0000318"/>
    <property type="project" value="GO_Central"/>
</dbReference>
<dbReference type="GO" id="GO:0000981">
    <property type="term" value="F:DNA-binding transcription factor activity, RNA polymerase II-specific"/>
    <property type="evidence" value="ECO:0000318"/>
    <property type="project" value="GO_Central"/>
</dbReference>
<dbReference type="GO" id="GO:0000978">
    <property type="term" value="F:RNA polymerase II cis-regulatory region sequence-specific DNA binding"/>
    <property type="evidence" value="ECO:0000318"/>
    <property type="project" value="GO_Central"/>
</dbReference>
<dbReference type="GO" id="GO:0008270">
    <property type="term" value="F:zinc ion binding"/>
    <property type="evidence" value="ECO:0007669"/>
    <property type="project" value="UniProtKB-KW"/>
</dbReference>
<dbReference type="GO" id="GO:0061484">
    <property type="term" value="P:hematopoietic stem cell homeostasis"/>
    <property type="evidence" value="ECO:0007669"/>
    <property type="project" value="Ensembl"/>
</dbReference>
<dbReference type="GO" id="GO:0006357">
    <property type="term" value="P:regulation of transcription by RNA polymerase II"/>
    <property type="evidence" value="ECO:0000318"/>
    <property type="project" value="GO_Central"/>
</dbReference>
<dbReference type="CDD" id="cd07765">
    <property type="entry name" value="KRAB_A-box"/>
    <property type="match status" value="1"/>
</dbReference>
<dbReference type="FunFam" id="3.30.160.60:FF:000555">
    <property type="entry name" value="Zinc finger protein 1 homolog"/>
    <property type="match status" value="1"/>
</dbReference>
<dbReference type="FunFam" id="3.30.160.60:FF:003341">
    <property type="entry name" value="Zinc finger protein 1152"/>
    <property type="match status" value="1"/>
</dbReference>
<dbReference type="FunFam" id="3.30.160.60:FF:002129">
    <property type="entry name" value="Zinc finger protein 304"/>
    <property type="match status" value="1"/>
</dbReference>
<dbReference type="FunFam" id="3.30.160.60:FF:001336">
    <property type="entry name" value="Zinc finger protein 334"/>
    <property type="match status" value="1"/>
</dbReference>
<dbReference type="FunFam" id="3.30.160.60:FF:000016">
    <property type="entry name" value="zinc finger protein 37 homolog"/>
    <property type="match status" value="3"/>
</dbReference>
<dbReference type="FunFam" id="3.30.160.60:FF:002090">
    <property type="entry name" value="Zinc finger protein 473"/>
    <property type="match status" value="3"/>
</dbReference>
<dbReference type="FunFam" id="3.30.160.60:FF:001532">
    <property type="entry name" value="Zinc finger protein 483"/>
    <property type="match status" value="1"/>
</dbReference>
<dbReference type="FunFam" id="3.30.160.60:FF:000878">
    <property type="entry name" value="Zinc finger protein 544"/>
    <property type="match status" value="1"/>
</dbReference>
<dbReference type="FunFam" id="3.30.160.60:FF:000953">
    <property type="entry name" value="Zinc finger protein 691"/>
    <property type="match status" value="1"/>
</dbReference>
<dbReference type="Gene3D" id="6.10.140.140">
    <property type="match status" value="1"/>
</dbReference>
<dbReference type="Gene3D" id="3.30.160.60">
    <property type="entry name" value="Classic Zinc Finger"/>
    <property type="match status" value="14"/>
</dbReference>
<dbReference type="InterPro" id="IPR001909">
    <property type="entry name" value="KRAB"/>
</dbReference>
<dbReference type="InterPro" id="IPR036051">
    <property type="entry name" value="KRAB_dom_sf"/>
</dbReference>
<dbReference type="InterPro" id="IPR036236">
    <property type="entry name" value="Znf_C2H2_sf"/>
</dbReference>
<dbReference type="InterPro" id="IPR013087">
    <property type="entry name" value="Znf_C2H2_type"/>
</dbReference>
<dbReference type="PANTHER" id="PTHR23235:SF178">
    <property type="entry name" value="C2H2-TYPE DOMAIN-CONTAINING PROTEIN-RELATED"/>
    <property type="match status" value="1"/>
</dbReference>
<dbReference type="PANTHER" id="PTHR23235">
    <property type="entry name" value="KRUEPPEL-LIKE TRANSCRIPTION FACTOR"/>
    <property type="match status" value="1"/>
</dbReference>
<dbReference type="Pfam" id="PF01352">
    <property type="entry name" value="KRAB"/>
    <property type="match status" value="1"/>
</dbReference>
<dbReference type="Pfam" id="PF00096">
    <property type="entry name" value="zf-C2H2"/>
    <property type="match status" value="12"/>
</dbReference>
<dbReference type="SMART" id="SM00349">
    <property type="entry name" value="KRAB"/>
    <property type="match status" value="1"/>
</dbReference>
<dbReference type="SMART" id="SM00355">
    <property type="entry name" value="ZnF_C2H2"/>
    <property type="match status" value="12"/>
</dbReference>
<dbReference type="SUPFAM" id="SSF57667">
    <property type="entry name" value="beta-beta-alpha zinc fingers"/>
    <property type="match status" value="8"/>
</dbReference>
<dbReference type="SUPFAM" id="SSF109640">
    <property type="entry name" value="KRAB domain (Kruppel-associated box)"/>
    <property type="match status" value="1"/>
</dbReference>
<dbReference type="PROSITE" id="PS50805">
    <property type="entry name" value="KRAB"/>
    <property type="match status" value="1"/>
</dbReference>
<dbReference type="PROSITE" id="PS00028">
    <property type="entry name" value="ZINC_FINGER_C2H2_1"/>
    <property type="match status" value="12"/>
</dbReference>
<dbReference type="PROSITE" id="PS50157">
    <property type="entry name" value="ZINC_FINGER_C2H2_2"/>
    <property type="match status" value="13"/>
</dbReference>
<proteinExistence type="evidence at protein level"/>
<accession>Q9BRH9</accession>
<accession>Q2M219</accession>
<reference key="1">
    <citation type="journal article" date="2004" name="Nat. Genet.">
        <title>Complete sequencing and characterization of 21,243 full-length human cDNAs.</title>
        <authorList>
            <person name="Ota T."/>
            <person name="Suzuki Y."/>
            <person name="Nishikawa T."/>
            <person name="Otsuki T."/>
            <person name="Sugiyama T."/>
            <person name="Irie R."/>
            <person name="Wakamatsu A."/>
            <person name="Hayashi K."/>
            <person name="Sato H."/>
            <person name="Nagai K."/>
            <person name="Kimura K."/>
            <person name="Makita H."/>
            <person name="Sekine M."/>
            <person name="Obayashi M."/>
            <person name="Nishi T."/>
            <person name="Shibahara T."/>
            <person name="Tanaka T."/>
            <person name="Ishii S."/>
            <person name="Yamamoto J."/>
            <person name="Saito K."/>
            <person name="Kawai Y."/>
            <person name="Isono Y."/>
            <person name="Nakamura Y."/>
            <person name="Nagahari K."/>
            <person name="Murakami K."/>
            <person name="Yasuda T."/>
            <person name="Iwayanagi T."/>
            <person name="Wagatsuma M."/>
            <person name="Shiratori A."/>
            <person name="Sudo H."/>
            <person name="Hosoiri T."/>
            <person name="Kaku Y."/>
            <person name="Kodaira H."/>
            <person name="Kondo H."/>
            <person name="Sugawara M."/>
            <person name="Takahashi M."/>
            <person name="Kanda K."/>
            <person name="Yokoi T."/>
            <person name="Furuya T."/>
            <person name="Kikkawa E."/>
            <person name="Omura Y."/>
            <person name="Abe K."/>
            <person name="Kamihara K."/>
            <person name="Katsuta N."/>
            <person name="Sato K."/>
            <person name="Tanikawa M."/>
            <person name="Yamazaki M."/>
            <person name="Ninomiya K."/>
            <person name="Ishibashi T."/>
            <person name="Yamashita H."/>
            <person name="Murakawa K."/>
            <person name="Fujimori K."/>
            <person name="Tanai H."/>
            <person name="Kimata M."/>
            <person name="Watanabe M."/>
            <person name="Hiraoka S."/>
            <person name="Chiba Y."/>
            <person name="Ishida S."/>
            <person name="Ono Y."/>
            <person name="Takiguchi S."/>
            <person name="Watanabe S."/>
            <person name="Yosida M."/>
            <person name="Hotuta T."/>
            <person name="Kusano J."/>
            <person name="Kanehori K."/>
            <person name="Takahashi-Fujii A."/>
            <person name="Hara H."/>
            <person name="Tanase T.-O."/>
            <person name="Nomura Y."/>
            <person name="Togiya S."/>
            <person name="Komai F."/>
            <person name="Hara R."/>
            <person name="Takeuchi K."/>
            <person name="Arita M."/>
            <person name="Imose N."/>
            <person name="Musashino K."/>
            <person name="Yuuki H."/>
            <person name="Oshima A."/>
            <person name="Sasaki N."/>
            <person name="Aotsuka S."/>
            <person name="Yoshikawa Y."/>
            <person name="Matsunawa H."/>
            <person name="Ichihara T."/>
            <person name="Shiohata N."/>
            <person name="Sano S."/>
            <person name="Moriya S."/>
            <person name="Momiyama H."/>
            <person name="Satoh N."/>
            <person name="Takami S."/>
            <person name="Terashima Y."/>
            <person name="Suzuki O."/>
            <person name="Nakagawa S."/>
            <person name="Senoh A."/>
            <person name="Mizoguchi H."/>
            <person name="Goto Y."/>
            <person name="Shimizu F."/>
            <person name="Wakebe H."/>
            <person name="Hishigaki H."/>
            <person name="Watanabe T."/>
            <person name="Sugiyama A."/>
            <person name="Takemoto M."/>
            <person name="Kawakami B."/>
            <person name="Yamazaki M."/>
            <person name="Watanabe K."/>
            <person name="Kumagai A."/>
            <person name="Itakura S."/>
            <person name="Fukuzumi Y."/>
            <person name="Fujimori Y."/>
            <person name="Komiyama M."/>
            <person name="Tashiro H."/>
            <person name="Tanigami A."/>
            <person name="Fujiwara T."/>
            <person name="Ono T."/>
            <person name="Yamada K."/>
            <person name="Fujii Y."/>
            <person name="Ozaki K."/>
            <person name="Hirao M."/>
            <person name="Ohmori Y."/>
            <person name="Kawabata A."/>
            <person name="Hikiji T."/>
            <person name="Kobatake N."/>
            <person name="Inagaki H."/>
            <person name="Ikema Y."/>
            <person name="Okamoto S."/>
            <person name="Okitani R."/>
            <person name="Kawakami T."/>
            <person name="Noguchi S."/>
            <person name="Itoh T."/>
            <person name="Shigeta K."/>
            <person name="Senba T."/>
            <person name="Matsumura K."/>
            <person name="Nakajima Y."/>
            <person name="Mizuno T."/>
            <person name="Morinaga M."/>
            <person name="Sasaki M."/>
            <person name="Togashi T."/>
            <person name="Oyama M."/>
            <person name="Hata H."/>
            <person name="Watanabe M."/>
            <person name="Komatsu T."/>
            <person name="Mizushima-Sugano J."/>
            <person name="Satoh T."/>
            <person name="Shirai Y."/>
            <person name="Takahashi Y."/>
            <person name="Nakagawa K."/>
            <person name="Okumura K."/>
            <person name="Nagase T."/>
            <person name="Nomura N."/>
            <person name="Kikuchi H."/>
            <person name="Masuho Y."/>
            <person name="Yamashita R."/>
            <person name="Nakai K."/>
            <person name="Yada T."/>
            <person name="Nakamura Y."/>
            <person name="Ohara O."/>
            <person name="Isogai T."/>
            <person name="Sugano S."/>
        </authorList>
    </citation>
    <scope>NUCLEOTIDE SEQUENCE [LARGE SCALE MRNA]</scope>
</reference>
<reference key="2">
    <citation type="journal article" date="2006" name="Nature">
        <title>DNA sequence and analysis of human chromosome 8.</title>
        <authorList>
            <person name="Nusbaum C."/>
            <person name="Mikkelsen T.S."/>
            <person name="Zody M.C."/>
            <person name="Asakawa S."/>
            <person name="Taudien S."/>
            <person name="Garber M."/>
            <person name="Kodira C.D."/>
            <person name="Schueler M.G."/>
            <person name="Shimizu A."/>
            <person name="Whittaker C.A."/>
            <person name="Chang J.L."/>
            <person name="Cuomo C.A."/>
            <person name="Dewar K."/>
            <person name="FitzGerald M.G."/>
            <person name="Yang X."/>
            <person name="Allen N.R."/>
            <person name="Anderson S."/>
            <person name="Asakawa T."/>
            <person name="Blechschmidt K."/>
            <person name="Bloom T."/>
            <person name="Borowsky M.L."/>
            <person name="Butler J."/>
            <person name="Cook A."/>
            <person name="Corum B."/>
            <person name="DeArellano K."/>
            <person name="DeCaprio D."/>
            <person name="Dooley K.T."/>
            <person name="Dorris L. III"/>
            <person name="Engels R."/>
            <person name="Gloeckner G."/>
            <person name="Hafez N."/>
            <person name="Hagopian D.S."/>
            <person name="Hall J.L."/>
            <person name="Ishikawa S.K."/>
            <person name="Jaffe D.B."/>
            <person name="Kamat A."/>
            <person name="Kudoh J."/>
            <person name="Lehmann R."/>
            <person name="Lokitsang T."/>
            <person name="Macdonald P."/>
            <person name="Major J.E."/>
            <person name="Matthews C.D."/>
            <person name="Mauceli E."/>
            <person name="Menzel U."/>
            <person name="Mihalev A.H."/>
            <person name="Minoshima S."/>
            <person name="Murayama Y."/>
            <person name="Naylor J.W."/>
            <person name="Nicol R."/>
            <person name="Nguyen C."/>
            <person name="O'Leary S.B."/>
            <person name="O'Neill K."/>
            <person name="Parker S.C.J."/>
            <person name="Polley A."/>
            <person name="Raymond C.K."/>
            <person name="Reichwald K."/>
            <person name="Rodriguez J."/>
            <person name="Sasaki T."/>
            <person name="Schilhabel M."/>
            <person name="Siddiqui R."/>
            <person name="Smith C.L."/>
            <person name="Sneddon T.P."/>
            <person name="Talamas J.A."/>
            <person name="Tenzin P."/>
            <person name="Topham K."/>
            <person name="Venkataraman V."/>
            <person name="Wen G."/>
            <person name="Yamazaki S."/>
            <person name="Young S.K."/>
            <person name="Zeng Q."/>
            <person name="Zimmer A.R."/>
            <person name="Rosenthal A."/>
            <person name="Birren B.W."/>
            <person name="Platzer M."/>
            <person name="Shimizu N."/>
            <person name="Lander E.S."/>
        </authorList>
    </citation>
    <scope>NUCLEOTIDE SEQUENCE [LARGE SCALE GENOMIC DNA]</scope>
</reference>
<reference key="3">
    <citation type="journal article" date="2004" name="Genome Res.">
        <title>The status, quality, and expansion of the NIH full-length cDNA project: the Mammalian Gene Collection (MGC).</title>
        <authorList>
            <consortium name="The MGC Project Team"/>
        </authorList>
    </citation>
    <scope>NUCLEOTIDE SEQUENCE [LARGE SCALE MRNA] OF 379-671</scope>
    <source>
        <tissue>Brain</tissue>
        <tissue>Ovary</tissue>
    </source>
</reference>
<reference key="4">
    <citation type="journal article" date="2017" name="Nat. Struct. Mol. Biol.">
        <title>Site-specific mapping of the human SUMO proteome reveals co-modification with phosphorylation.</title>
        <authorList>
            <person name="Hendriks I.A."/>
            <person name="Lyon D."/>
            <person name="Young C."/>
            <person name="Jensen L.J."/>
            <person name="Vertegaal A.C."/>
            <person name="Nielsen M.L."/>
        </authorList>
    </citation>
    <scope>SUMOYLATION [LARGE SCALE ANALYSIS] AT LYS-114; LYS-157; LYS-162 AND LYS-403</scope>
    <scope>IDENTIFICATION BY MASS SPECTROMETRY [LARGE SCALE ANALYSIS]</scope>
</reference>
<feature type="chain" id="PRO_0000047485" description="Zinc finger protein 251">
    <location>
        <begin position="1"/>
        <end position="671"/>
    </location>
</feature>
<feature type="domain" description="KRAB" evidence="2">
    <location>
        <begin position="15"/>
        <end position="86"/>
    </location>
</feature>
<feature type="zinc finger region" description="C2H2-type 1" evidence="1">
    <location>
        <begin position="209"/>
        <end position="231"/>
    </location>
</feature>
<feature type="zinc finger region" description="C2H2-type 2" evidence="1">
    <location>
        <begin position="237"/>
        <end position="259"/>
    </location>
</feature>
<feature type="zinc finger region" description="C2H2-type 3" evidence="1">
    <location>
        <begin position="265"/>
        <end position="287"/>
    </location>
</feature>
<feature type="zinc finger region" description="C2H2-type 4" evidence="1">
    <location>
        <begin position="293"/>
        <end position="315"/>
    </location>
</feature>
<feature type="zinc finger region" description="C2H2-type 5" evidence="1">
    <location>
        <begin position="321"/>
        <end position="343"/>
    </location>
</feature>
<feature type="zinc finger region" description="C2H2-type 6" evidence="1">
    <location>
        <begin position="349"/>
        <end position="371"/>
    </location>
</feature>
<feature type="zinc finger region" description="C2H2-type 7" evidence="1">
    <location>
        <begin position="377"/>
        <end position="399"/>
    </location>
</feature>
<feature type="zinc finger region" description="C2H2-type 8" evidence="1">
    <location>
        <begin position="405"/>
        <end position="427"/>
    </location>
</feature>
<feature type="zinc finger region" description="C2H2-type 9" evidence="1">
    <location>
        <begin position="433"/>
        <end position="455"/>
    </location>
</feature>
<feature type="zinc finger region" description="C2H2-type 10" evidence="1">
    <location>
        <begin position="461"/>
        <end position="483"/>
    </location>
</feature>
<feature type="zinc finger region" description="C2H2-type 11" evidence="1">
    <location>
        <begin position="489"/>
        <end position="511"/>
    </location>
</feature>
<feature type="zinc finger region" description="C2H2-type 12; degenerate" evidence="1">
    <location>
        <begin position="566"/>
        <end position="588"/>
    </location>
</feature>
<feature type="zinc finger region" description="C2H2-type 13" evidence="1">
    <location>
        <begin position="594"/>
        <end position="616"/>
    </location>
</feature>
<feature type="zinc finger region" description="C2H2-type 14; degenerate" evidence="1">
    <location>
        <begin position="622"/>
        <end position="644"/>
    </location>
</feature>
<feature type="cross-link" description="Glycyl lysine isopeptide (Lys-Gly) (interchain with G-Cter in SUMO2)" evidence="4">
    <location>
        <position position="114"/>
    </location>
</feature>
<feature type="cross-link" description="Glycyl lysine isopeptide (Lys-Gly) (interchain with G-Cter in SUMO2)" evidence="4">
    <location>
        <position position="157"/>
    </location>
</feature>
<feature type="cross-link" description="Glycyl lysine isopeptide (Lys-Gly) (interchain with G-Cter in SUMO2)" evidence="4">
    <location>
        <position position="162"/>
    </location>
</feature>
<feature type="cross-link" description="Glycyl lysine isopeptide (Lys-Gly) (interchain with G-Cter in SUMO2)" evidence="4">
    <location>
        <position position="403"/>
    </location>
</feature>
<feature type="sequence conflict" description="In Ref. 1; AK000435." evidence="3" ref="1">
    <original>T</original>
    <variation>A</variation>
    <location>
        <position position="204"/>
    </location>
</feature>